<accession>Q5E726</accession>
<evidence type="ECO:0000255" key="1">
    <source>
        <dbReference type="HAMAP-Rule" id="MF_00739"/>
    </source>
</evidence>
<reference key="1">
    <citation type="journal article" date="2005" name="Proc. Natl. Acad. Sci. U.S.A.">
        <title>Complete genome sequence of Vibrio fischeri: a symbiotic bacterium with pathogenic congeners.</title>
        <authorList>
            <person name="Ruby E.G."/>
            <person name="Urbanowski M."/>
            <person name="Campbell J."/>
            <person name="Dunn A."/>
            <person name="Faini M."/>
            <person name="Gunsalus R."/>
            <person name="Lostroh P."/>
            <person name="Lupp C."/>
            <person name="McCann J."/>
            <person name="Millikan D."/>
            <person name="Schaefer A."/>
            <person name="Stabb E."/>
            <person name="Stevens A."/>
            <person name="Visick K."/>
            <person name="Whistler C."/>
            <person name="Greenberg E.P."/>
        </authorList>
    </citation>
    <scope>NUCLEOTIDE SEQUENCE [LARGE SCALE GENOMIC DNA]</scope>
    <source>
        <strain>ATCC 700601 / ES114</strain>
    </source>
</reference>
<gene>
    <name evidence="1" type="primary">ureA</name>
    <name type="ordered locus">VF_0675</name>
</gene>
<comment type="catalytic activity">
    <reaction evidence="1">
        <text>urea + 2 H2O + H(+) = hydrogencarbonate + 2 NH4(+)</text>
        <dbReference type="Rhea" id="RHEA:20557"/>
        <dbReference type="ChEBI" id="CHEBI:15377"/>
        <dbReference type="ChEBI" id="CHEBI:15378"/>
        <dbReference type="ChEBI" id="CHEBI:16199"/>
        <dbReference type="ChEBI" id="CHEBI:17544"/>
        <dbReference type="ChEBI" id="CHEBI:28938"/>
        <dbReference type="EC" id="3.5.1.5"/>
    </reaction>
</comment>
<comment type="pathway">
    <text evidence="1">Nitrogen metabolism; urea degradation; CO(2) and NH(3) from urea (urease route): step 1/1.</text>
</comment>
<comment type="subunit">
    <text evidence="1">Heterotrimer of UreA (gamma), UreB (beta) and UreC (alpha) subunits. Three heterotrimers associate to form the active enzyme.</text>
</comment>
<comment type="subcellular location">
    <subcellularLocation>
        <location evidence="1">Cytoplasm</location>
    </subcellularLocation>
</comment>
<comment type="similarity">
    <text evidence="1">Belongs to the urease gamma subunit family.</text>
</comment>
<feature type="chain" id="PRO_0000234219" description="Urease subunit gamma">
    <location>
        <begin position="1"/>
        <end position="100"/>
    </location>
</feature>
<proteinExistence type="inferred from homology"/>
<organism>
    <name type="scientific">Aliivibrio fischeri (strain ATCC 700601 / ES114)</name>
    <name type="common">Vibrio fischeri</name>
    <dbReference type="NCBI Taxonomy" id="312309"/>
    <lineage>
        <taxon>Bacteria</taxon>
        <taxon>Pseudomonadati</taxon>
        <taxon>Pseudomonadota</taxon>
        <taxon>Gammaproteobacteria</taxon>
        <taxon>Vibrionales</taxon>
        <taxon>Vibrionaceae</taxon>
        <taxon>Aliivibrio</taxon>
    </lineage>
</organism>
<sequence length="100" mass="11076">MELTPREKDKLLLASAGMIAERRKARGLKLNYPEAVALICFEIMEGARDGRTVADLMNYGRTILTADDVMEGVPEMIPDVQVECTFPDGTKLVSIHEPIV</sequence>
<keyword id="KW-0963">Cytoplasm</keyword>
<keyword id="KW-0378">Hydrolase</keyword>
<keyword id="KW-1185">Reference proteome</keyword>
<name>URE3_ALIF1</name>
<protein>
    <recommendedName>
        <fullName evidence="1">Urease subunit gamma</fullName>
        <ecNumber evidence="1">3.5.1.5</ecNumber>
    </recommendedName>
    <alternativeName>
        <fullName evidence="1">Urea amidohydrolase subunit gamma</fullName>
    </alternativeName>
</protein>
<dbReference type="EC" id="3.5.1.5" evidence="1"/>
<dbReference type="EMBL" id="CP000020">
    <property type="protein sequence ID" value="AAW85170.1"/>
    <property type="molecule type" value="Genomic_DNA"/>
</dbReference>
<dbReference type="RefSeq" id="WP_005418034.1">
    <property type="nucleotide sequence ID" value="NZ_CAWLES010000001.1"/>
</dbReference>
<dbReference type="RefSeq" id="YP_204058.1">
    <property type="nucleotide sequence ID" value="NC_006840.2"/>
</dbReference>
<dbReference type="SMR" id="Q5E726"/>
<dbReference type="STRING" id="312309.VF_0675"/>
<dbReference type="EnsemblBacteria" id="AAW85170">
    <property type="protein sequence ID" value="AAW85170"/>
    <property type="gene ID" value="VF_0675"/>
</dbReference>
<dbReference type="GeneID" id="54163330"/>
<dbReference type="KEGG" id="vfi:VF_0675"/>
<dbReference type="PATRIC" id="fig|312309.11.peg.668"/>
<dbReference type="eggNOG" id="COG0831">
    <property type="taxonomic scope" value="Bacteria"/>
</dbReference>
<dbReference type="HOGENOM" id="CLU_145825_1_0_6"/>
<dbReference type="OrthoDB" id="9797217at2"/>
<dbReference type="UniPathway" id="UPA00258">
    <property type="reaction ID" value="UER00370"/>
</dbReference>
<dbReference type="Proteomes" id="UP000000537">
    <property type="component" value="Chromosome I"/>
</dbReference>
<dbReference type="GO" id="GO:0005737">
    <property type="term" value="C:cytoplasm"/>
    <property type="evidence" value="ECO:0007669"/>
    <property type="project" value="UniProtKB-SubCell"/>
</dbReference>
<dbReference type="GO" id="GO:0016151">
    <property type="term" value="F:nickel cation binding"/>
    <property type="evidence" value="ECO:0007669"/>
    <property type="project" value="InterPro"/>
</dbReference>
<dbReference type="GO" id="GO:0009039">
    <property type="term" value="F:urease activity"/>
    <property type="evidence" value="ECO:0007669"/>
    <property type="project" value="UniProtKB-UniRule"/>
</dbReference>
<dbReference type="GO" id="GO:0043419">
    <property type="term" value="P:urea catabolic process"/>
    <property type="evidence" value="ECO:0007669"/>
    <property type="project" value="UniProtKB-UniRule"/>
</dbReference>
<dbReference type="CDD" id="cd00390">
    <property type="entry name" value="Urease_gamma"/>
    <property type="match status" value="1"/>
</dbReference>
<dbReference type="Gene3D" id="3.30.280.10">
    <property type="entry name" value="Urease, gamma-like subunit"/>
    <property type="match status" value="1"/>
</dbReference>
<dbReference type="HAMAP" id="MF_00739">
    <property type="entry name" value="Urease_gamma"/>
    <property type="match status" value="1"/>
</dbReference>
<dbReference type="InterPro" id="IPR012010">
    <property type="entry name" value="Urease_gamma"/>
</dbReference>
<dbReference type="InterPro" id="IPR002026">
    <property type="entry name" value="Urease_gamma/gamma-beta_su"/>
</dbReference>
<dbReference type="InterPro" id="IPR036463">
    <property type="entry name" value="Urease_gamma_sf"/>
</dbReference>
<dbReference type="InterPro" id="IPR050069">
    <property type="entry name" value="Urease_subunit"/>
</dbReference>
<dbReference type="NCBIfam" id="NF009712">
    <property type="entry name" value="PRK13241.1"/>
    <property type="match status" value="1"/>
</dbReference>
<dbReference type="NCBIfam" id="TIGR00193">
    <property type="entry name" value="urease_gam"/>
    <property type="match status" value="1"/>
</dbReference>
<dbReference type="PANTHER" id="PTHR33569">
    <property type="entry name" value="UREASE"/>
    <property type="match status" value="1"/>
</dbReference>
<dbReference type="PANTHER" id="PTHR33569:SF1">
    <property type="entry name" value="UREASE"/>
    <property type="match status" value="1"/>
</dbReference>
<dbReference type="Pfam" id="PF00547">
    <property type="entry name" value="Urease_gamma"/>
    <property type="match status" value="1"/>
</dbReference>
<dbReference type="PIRSF" id="PIRSF001223">
    <property type="entry name" value="Urease_gamma"/>
    <property type="match status" value="1"/>
</dbReference>
<dbReference type="SUPFAM" id="SSF54111">
    <property type="entry name" value="Urease, gamma-subunit"/>
    <property type="match status" value="1"/>
</dbReference>